<reference key="1">
    <citation type="journal article" date="2002" name="Nature">
        <title>Comparison of the genomes of two Xanthomonas pathogens with differing host specificities.</title>
        <authorList>
            <person name="da Silva A.C.R."/>
            <person name="Ferro J.A."/>
            <person name="Reinach F.C."/>
            <person name="Farah C.S."/>
            <person name="Furlan L.R."/>
            <person name="Quaggio R.B."/>
            <person name="Monteiro-Vitorello C.B."/>
            <person name="Van Sluys M.A."/>
            <person name="Almeida N.F. Jr."/>
            <person name="Alves L.M.C."/>
            <person name="do Amaral A.M."/>
            <person name="Bertolini M.C."/>
            <person name="Camargo L.E.A."/>
            <person name="Camarotte G."/>
            <person name="Cannavan F."/>
            <person name="Cardozo J."/>
            <person name="Chambergo F."/>
            <person name="Ciapina L.P."/>
            <person name="Cicarelli R.M.B."/>
            <person name="Coutinho L.L."/>
            <person name="Cursino-Santos J.R."/>
            <person name="El-Dorry H."/>
            <person name="Faria J.B."/>
            <person name="Ferreira A.J.S."/>
            <person name="Ferreira R.C.C."/>
            <person name="Ferro M.I.T."/>
            <person name="Formighieri E.F."/>
            <person name="Franco M.C."/>
            <person name="Greggio C.C."/>
            <person name="Gruber A."/>
            <person name="Katsuyama A.M."/>
            <person name="Kishi L.T."/>
            <person name="Leite R.P."/>
            <person name="Lemos E.G.M."/>
            <person name="Lemos M.V.F."/>
            <person name="Locali E.C."/>
            <person name="Machado M.A."/>
            <person name="Madeira A.M.B.N."/>
            <person name="Martinez-Rossi N.M."/>
            <person name="Martins E.C."/>
            <person name="Meidanis J."/>
            <person name="Menck C.F.M."/>
            <person name="Miyaki C.Y."/>
            <person name="Moon D.H."/>
            <person name="Moreira L.M."/>
            <person name="Novo M.T.M."/>
            <person name="Okura V.K."/>
            <person name="Oliveira M.C."/>
            <person name="Oliveira V.R."/>
            <person name="Pereira H.A."/>
            <person name="Rossi A."/>
            <person name="Sena J.A.D."/>
            <person name="Silva C."/>
            <person name="de Souza R.F."/>
            <person name="Spinola L.A.F."/>
            <person name="Takita M.A."/>
            <person name="Tamura R.E."/>
            <person name="Teixeira E.C."/>
            <person name="Tezza R.I.D."/>
            <person name="Trindade dos Santos M."/>
            <person name="Truffi D."/>
            <person name="Tsai S.M."/>
            <person name="White F.F."/>
            <person name="Setubal J.C."/>
            <person name="Kitajima J.P."/>
        </authorList>
    </citation>
    <scope>NUCLEOTIDE SEQUENCE [LARGE SCALE GENOMIC DNA]</scope>
    <source>
        <strain>ATCC 33913 / DSM 3586 / NCPPB 528 / LMG 568 / P 25</strain>
    </source>
</reference>
<organism>
    <name type="scientific">Xanthomonas campestris pv. campestris (strain ATCC 33913 / DSM 3586 / NCPPB 528 / LMG 568 / P 25)</name>
    <dbReference type="NCBI Taxonomy" id="190485"/>
    <lineage>
        <taxon>Bacteria</taxon>
        <taxon>Pseudomonadati</taxon>
        <taxon>Pseudomonadota</taxon>
        <taxon>Gammaproteobacteria</taxon>
        <taxon>Lysobacterales</taxon>
        <taxon>Lysobacteraceae</taxon>
        <taxon>Xanthomonas</taxon>
    </lineage>
</organism>
<dbReference type="EC" id="2.7.7.-" evidence="1"/>
<dbReference type="EC" id="2.7.7.108" evidence="1"/>
<dbReference type="EMBL" id="AE008922">
    <property type="protein sequence ID" value="AAM41563.1"/>
    <property type="molecule type" value="Genomic_DNA"/>
</dbReference>
<dbReference type="RefSeq" id="NP_637639.1">
    <property type="nucleotide sequence ID" value="NC_003902.1"/>
</dbReference>
<dbReference type="RefSeq" id="WP_011037428.1">
    <property type="nucleotide sequence ID" value="NC_003902.1"/>
</dbReference>
<dbReference type="SMR" id="Q8P8F8"/>
<dbReference type="STRING" id="190485.XCC2284"/>
<dbReference type="EnsemblBacteria" id="AAM41563">
    <property type="protein sequence ID" value="AAM41563"/>
    <property type="gene ID" value="XCC2284"/>
</dbReference>
<dbReference type="KEGG" id="xcc:XCC2284"/>
<dbReference type="PATRIC" id="fig|190485.4.peg.2434"/>
<dbReference type="eggNOG" id="COG0397">
    <property type="taxonomic scope" value="Bacteria"/>
</dbReference>
<dbReference type="HOGENOM" id="CLU_010245_4_0_6"/>
<dbReference type="OrthoDB" id="9776281at2"/>
<dbReference type="Proteomes" id="UP000001010">
    <property type="component" value="Chromosome"/>
</dbReference>
<dbReference type="GO" id="GO:0070733">
    <property type="term" value="F:AMPylase activity"/>
    <property type="evidence" value="ECO:0000318"/>
    <property type="project" value="GO_Central"/>
</dbReference>
<dbReference type="GO" id="GO:0005524">
    <property type="term" value="F:ATP binding"/>
    <property type="evidence" value="ECO:0007669"/>
    <property type="project" value="UniProtKB-UniRule"/>
</dbReference>
<dbReference type="GO" id="GO:0000287">
    <property type="term" value="F:magnesium ion binding"/>
    <property type="evidence" value="ECO:0007669"/>
    <property type="project" value="UniProtKB-UniRule"/>
</dbReference>
<dbReference type="HAMAP" id="MF_00692">
    <property type="entry name" value="YdiU_SelO"/>
    <property type="match status" value="1"/>
</dbReference>
<dbReference type="InterPro" id="IPR003846">
    <property type="entry name" value="SelO"/>
</dbReference>
<dbReference type="NCBIfam" id="NF000658">
    <property type="entry name" value="PRK00029.1"/>
    <property type="match status" value="1"/>
</dbReference>
<dbReference type="PANTHER" id="PTHR32057">
    <property type="entry name" value="PROTEIN ADENYLYLTRANSFERASE SELO, MITOCHONDRIAL"/>
    <property type="match status" value="1"/>
</dbReference>
<dbReference type="PANTHER" id="PTHR32057:SF14">
    <property type="entry name" value="PROTEIN ADENYLYLTRANSFERASE SELO, MITOCHONDRIAL"/>
    <property type="match status" value="1"/>
</dbReference>
<dbReference type="Pfam" id="PF02696">
    <property type="entry name" value="SelO"/>
    <property type="match status" value="1"/>
</dbReference>
<name>SELO_XANCP</name>
<feature type="chain" id="PRO_0000121439" description="Protein nucleotidyltransferase YdiU">
    <location>
        <begin position="1"/>
        <end position="518"/>
    </location>
</feature>
<feature type="region of interest" description="Disordered" evidence="2">
    <location>
        <begin position="1"/>
        <end position="22"/>
    </location>
</feature>
<feature type="active site" description="Proton acceptor" evidence="1">
    <location>
        <position position="270"/>
    </location>
</feature>
<feature type="binding site" evidence="1">
    <location>
        <position position="100"/>
    </location>
    <ligand>
        <name>ATP</name>
        <dbReference type="ChEBI" id="CHEBI:30616"/>
    </ligand>
</feature>
<feature type="binding site" evidence="1">
    <location>
        <position position="102"/>
    </location>
    <ligand>
        <name>ATP</name>
        <dbReference type="ChEBI" id="CHEBI:30616"/>
    </ligand>
</feature>
<feature type="binding site" evidence="1">
    <location>
        <position position="103"/>
    </location>
    <ligand>
        <name>ATP</name>
        <dbReference type="ChEBI" id="CHEBI:30616"/>
    </ligand>
</feature>
<feature type="binding site" evidence="1">
    <location>
        <position position="123"/>
    </location>
    <ligand>
        <name>ATP</name>
        <dbReference type="ChEBI" id="CHEBI:30616"/>
    </ligand>
</feature>
<feature type="binding site" evidence="1">
    <location>
        <position position="135"/>
    </location>
    <ligand>
        <name>ATP</name>
        <dbReference type="ChEBI" id="CHEBI:30616"/>
    </ligand>
</feature>
<feature type="binding site" evidence="1">
    <location>
        <position position="136"/>
    </location>
    <ligand>
        <name>ATP</name>
        <dbReference type="ChEBI" id="CHEBI:30616"/>
    </ligand>
</feature>
<feature type="binding site" evidence="1">
    <location>
        <position position="193"/>
    </location>
    <ligand>
        <name>ATP</name>
        <dbReference type="ChEBI" id="CHEBI:30616"/>
    </ligand>
</feature>
<feature type="binding site" evidence="1">
    <location>
        <position position="200"/>
    </location>
    <ligand>
        <name>ATP</name>
        <dbReference type="ChEBI" id="CHEBI:30616"/>
    </ligand>
</feature>
<feature type="binding site" evidence="1">
    <location>
        <position position="271"/>
    </location>
    <ligand>
        <name>Mg(2+)</name>
        <dbReference type="ChEBI" id="CHEBI:18420"/>
    </ligand>
</feature>
<feature type="binding site" evidence="1">
    <location>
        <position position="280"/>
    </location>
    <ligand>
        <name>ATP</name>
        <dbReference type="ChEBI" id="CHEBI:30616"/>
    </ligand>
</feature>
<feature type="binding site" evidence="1">
    <location>
        <position position="280"/>
    </location>
    <ligand>
        <name>Mg(2+)</name>
        <dbReference type="ChEBI" id="CHEBI:18420"/>
    </ligand>
</feature>
<gene>
    <name evidence="1" type="primary">ydiU</name>
    <name evidence="1" type="synonym">selO</name>
    <name type="ordered locus">XCC2284</name>
</gene>
<keyword id="KW-0067">ATP-binding</keyword>
<keyword id="KW-0460">Magnesium</keyword>
<keyword id="KW-0464">Manganese</keyword>
<keyword id="KW-0479">Metal-binding</keyword>
<keyword id="KW-0547">Nucleotide-binding</keyword>
<keyword id="KW-0548">Nucleotidyltransferase</keyword>
<keyword id="KW-1185">Reference proteome</keyword>
<keyword id="KW-0808">Transferase</keyword>
<evidence type="ECO:0000255" key="1">
    <source>
        <dbReference type="HAMAP-Rule" id="MF_00692"/>
    </source>
</evidence>
<evidence type="ECO:0000256" key="2">
    <source>
        <dbReference type="SAM" id="MobiDB-lite"/>
    </source>
</evidence>
<accession>Q8P8F8</accession>
<proteinExistence type="inferred from homology"/>
<comment type="function">
    <text evidence="1">Nucleotidyltransferase involved in the post-translational modification of proteins. It can catalyze the addition of adenosine monophosphate (AMP) or uridine monophosphate (UMP) to a protein, resulting in modifications known as AMPylation and UMPylation.</text>
</comment>
<comment type="catalytic activity">
    <reaction evidence="1">
        <text>L-seryl-[protein] + ATP = 3-O-(5'-adenylyl)-L-seryl-[protein] + diphosphate</text>
        <dbReference type="Rhea" id="RHEA:58120"/>
        <dbReference type="Rhea" id="RHEA-COMP:9863"/>
        <dbReference type="Rhea" id="RHEA-COMP:15073"/>
        <dbReference type="ChEBI" id="CHEBI:29999"/>
        <dbReference type="ChEBI" id="CHEBI:30616"/>
        <dbReference type="ChEBI" id="CHEBI:33019"/>
        <dbReference type="ChEBI" id="CHEBI:142516"/>
        <dbReference type="EC" id="2.7.7.108"/>
    </reaction>
</comment>
<comment type="catalytic activity">
    <reaction evidence="1">
        <text>L-threonyl-[protein] + ATP = 3-O-(5'-adenylyl)-L-threonyl-[protein] + diphosphate</text>
        <dbReference type="Rhea" id="RHEA:54292"/>
        <dbReference type="Rhea" id="RHEA-COMP:11060"/>
        <dbReference type="Rhea" id="RHEA-COMP:13847"/>
        <dbReference type="ChEBI" id="CHEBI:30013"/>
        <dbReference type="ChEBI" id="CHEBI:30616"/>
        <dbReference type="ChEBI" id="CHEBI:33019"/>
        <dbReference type="ChEBI" id="CHEBI:138113"/>
        <dbReference type="EC" id="2.7.7.108"/>
    </reaction>
</comment>
<comment type="catalytic activity">
    <reaction evidence="1">
        <text>L-tyrosyl-[protein] + ATP = O-(5'-adenylyl)-L-tyrosyl-[protein] + diphosphate</text>
        <dbReference type="Rhea" id="RHEA:54288"/>
        <dbReference type="Rhea" id="RHEA-COMP:10136"/>
        <dbReference type="Rhea" id="RHEA-COMP:13846"/>
        <dbReference type="ChEBI" id="CHEBI:30616"/>
        <dbReference type="ChEBI" id="CHEBI:33019"/>
        <dbReference type="ChEBI" id="CHEBI:46858"/>
        <dbReference type="ChEBI" id="CHEBI:83624"/>
        <dbReference type="EC" id="2.7.7.108"/>
    </reaction>
</comment>
<comment type="catalytic activity">
    <reaction evidence="1">
        <text>L-histidyl-[protein] + UTP = N(tele)-(5'-uridylyl)-L-histidyl-[protein] + diphosphate</text>
        <dbReference type="Rhea" id="RHEA:83891"/>
        <dbReference type="Rhea" id="RHEA-COMP:9745"/>
        <dbReference type="Rhea" id="RHEA-COMP:20239"/>
        <dbReference type="ChEBI" id="CHEBI:29979"/>
        <dbReference type="ChEBI" id="CHEBI:33019"/>
        <dbReference type="ChEBI" id="CHEBI:46398"/>
        <dbReference type="ChEBI" id="CHEBI:233474"/>
    </reaction>
</comment>
<comment type="catalytic activity">
    <reaction evidence="1">
        <text>L-seryl-[protein] + UTP = O-(5'-uridylyl)-L-seryl-[protein] + diphosphate</text>
        <dbReference type="Rhea" id="RHEA:64604"/>
        <dbReference type="Rhea" id="RHEA-COMP:9863"/>
        <dbReference type="Rhea" id="RHEA-COMP:16635"/>
        <dbReference type="ChEBI" id="CHEBI:29999"/>
        <dbReference type="ChEBI" id="CHEBI:33019"/>
        <dbReference type="ChEBI" id="CHEBI:46398"/>
        <dbReference type="ChEBI" id="CHEBI:156051"/>
    </reaction>
</comment>
<comment type="catalytic activity">
    <reaction evidence="1">
        <text>L-tyrosyl-[protein] + UTP = O-(5'-uridylyl)-L-tyrosyl-[protein] + diphosphate</text>
        <dbReference type="Rhea" id="RHEA:83887"/>
        <dbReference type="Rhea" id="RHEA-COMP:10136"/>
        <dbReference type="Rhea" id="RHEA-COMP:20238"/>
        <dbReference type="ChEBI" id="CHEBI:33019"/>
        <dbReference type="ChEBI" id="CHEBI:46398"/>
        <dbReference type="ChEBI" id="CHEBI:46858"/>
        <dbReference type="ChEBI" id="CHEBI:90602"/>
    </reaction>
</comment>
<comment type="cofactor">
    <cofactor evidence="1">
        <name>Mg(2+)</name>
        <dbReference type="ChEBI" id="CHEBI:18420"/>
    </cofactor>
    <cofactor evidence="1">
        <name>Mn(2+)</name>
        <dbReference type="ChEBI" id="CHEBI:29035"/>
    </cofactor>
</comment>
<comment type="similarity">
    <text evidence="1">Belongs to the SELO family.</text>
</comment>
<sequence length="518" mass="57259">MTHLQFDNRLRAELPGDPEEGPRRREVLAAWSAVQPTPVAAPTLLAYSADVAQRLGLRAEDLASPRFAEVFGGNALYPGMQPWAVNYGGHQFGHWAGQLGDGRAISLGEAIGVDGGRYELQLKGAGPTPYSRGADGRAVLRSSIREFLCSEAMHYLGVPTTRALSLVGTGDAVVRDMFYDGHPRREPGAIVCRVAPSFIRFGNFELPAARGDVDLLRQWVDFTLARDFPDLPGSGEDRIASWLGQVCERTAVMVAHWMRVGFVHGVMNTDNMSILGLTIDYGPYGWVDDYDPDWTPNTTDAQGRRYRFGTQPQVAYWNLGRLAQALSPLFGDAAPLQAGLDQFRDTYLACDRRDTAAKLGLAECQDEDLHLIDDLRALMREAEMDMTLTFRGLVDLSPQQPDASVLREAFYDETKRAAQAPALGAWLQRYAARCLQDGASDAVRASRMRAANPRYVLRNYLAQQAIDQAEQGDLSGVHALLEVMQRPYDDQPRRESFAAKRPDWARDRAGCSMLSCSS</sequence>
<protein>
    <recommendedName>
        <fullName evidence="1">Protein nucleotidyltransferase YdiU</fullName>
        <ecNumber evidence="1">2.7.7.-</ecNumber>
    </recommendedName>
    <alternativeName>
        <fullName evidence="1">Protein adenylyltransferase YdiU</fullName>
        <ecNumber evidence="1">2.7.7.108</ecNumber>
    </alternativeName>
    <alternativeName>
        <fullName evidence="1">Protein uridylyltransferase YdiU</fullName>
        <ecNumber evidence="1">2.7.7.-</ecNumber>
    </alternativeName>
</protein>